<reference key="1">
    <citation type="journal article" date="2005" name="BMC Biol.">
        <title>The complete chloroplast DNA sequences of the charophycean green algae Staurastrum and Zygnema reveal that the chloroplast genome underwent extensive changes during the evolution of the Zygnematales.</title>
        <authorList>
            <person name="Turmel M."/>
            <person name="Otis C."/>
            <person name="Lemieux C."/>
        </authorList>
    </citation>
    <scope>NUCLEOTIDE SEQUENCE [LARGE SCALE GENOMIC DNA]</scope>
</reference>
<organism>
    <name type="scientific">Staurastrum punctulatum</name>
    <name type="common">Green alga</name>
    <name type="synonym">Cosmoastrum punctulatum</name>
    <dbReference type="NCBI Taxonomy" id="102822"/>
    <lineage>
        <taxon>Eukaryota</taxon>
        <taxon>Viridiplantae</taxon>
        <taxon>Streptophyta</taxon>
        <taxon>Zygnematophyceae</taxon>
        <taxon>Zygnematophycidae</taxon>
        <taxon>Desmidiales</taxon>
        <taxon>Desmidiaceae</taxon>
        <taxon>Staurastrum</taxon>
    </lineage>
</organism>
<gene>
    <name evidence="1" type="primary">psbM</name>
</gene>
<comment type="function">
    <text evidence="1">One of the components of the core complex of photosystem II (PSII). PSII is a light-driven water:plastoquinone oxidoreductase that uses light energy to abstract electrons from H(2)O, generating O(2) and a proton gradient subsequently used for ATP formation. It consists of a core antenna complex that captures photons, and an electron transfer chain that converts photonic excitation into a charge separation. This subunit is found at the monomer-monomer interface.</text>
</comment>
<comment type="subunit">
    <text evidence="1">PSII is composed of 1 copy each of membrane proteins PsbA, PsbB, PsbC, PsbD, PsbE, PsbF, PsbH, PsbI, PsbJ, PsbK, PsbL, PsbM, PsbT, PsbX, PsbY, PsbZ, Psb30/Ycf12, at least 3 peripheral proteins of the oxygen-evolving complex and a large number of cofactors. It forms dimeric complexes.</text>
</comment>
<comment type="subcellular location">
    <subcellularLocation>
        <location evidence="1">Plastid</location>
        <location evidence="1">Chloroplast thylakoid membrane</location>
        <topology evidence="1">Single-pass membrane protein</topology>
    </subcellularLocation>
</comment>
<comment type="similarity">
    <text evidence="1">Belongs to the PsbM family.</text>
</comment>
<proteinExistence type="inferred from homology"/>
<name>PSBM_STAPU</name>
<dbReference type="EMBL" id="AY958085">
    <property type="protein sequence ID" value="AAX45732.1"/>
    <property type="molecule type" value="Genomic_DNA"/>
</dbReference>
<dbReference type="RefSeq" id="YP_636414.1">
    <property type="nucleotide sequence ID" value="NC_008116.1"/>
</dbReference>
<dbReference type="SMR" id="Q32RW2"/>
<dbReference type="GeneID" id="4108570"/>
<dbReference type="GO" id="GO:0009535">
    <property type="term" value="C:chloroplast thylakoid membrane"/>
    <property type="evidence" value="ECO:0007669"/>
    <property type="project" value="UniProtKB-SubCell"/>
</dbReference>
<dbReference type="GO" id="GO:0009523">
    <property type="term" value="C:photosystem II"/>
    <property type="evidence" value="ECO:0007669"/>
    <property type="project" value="UniProtKB-KW"/>
</dbReference>
<dbReference type="GO" id="GO:0019684">
    <property type="term" value="P:photosynthesis, light reaction"/>
    <property type="evidence" value="ECO:0007669"/>
    <property type="project" value="InterPro"/>
</dbReference>
<dbReference type="HAMAP" id="MF_00438">
    <property type="entry name" value="PSII_PsbM"/>
    <property type="match status" value="1"/>
</dbReference>
<dbReference type="InterPro" id="IPR007826">
    <property type="entry name" value="PSII_PsbM"/>
</dbReference>
<dbReference type="InterPro" id="IPR037269">
    <property type="entry name" value="PSII_PsbM_sf"/>
</dbReference>
<dbReference type="NCBIfam" id="TIGR03038">
    <property type="entry name" value="PS_II_psbM"/>
    <property type="match status" value="1"/>
</dbReference>
<dbReference type="PANTHER" id="PTHR35774">
    <property type="entry name" value="PHOTOSYSTEM II REACTION CENTER PROTEIN M"/>
    <property type="match status" value="1"/>
</dbReference>
<dbReference type="PANTHER" id="PTHR35774:SF1">
    <property type="entry name" value="PHOTOSYSTEM II REACTION CENTER PROTEIN M"/>
    <property type="match status" value="1"/>
</dbReference>
<dbReference type="Pfam" id="PF05151">
    <property type="entry name" value="PsbM"/>
    <property type="match status" value="1"/>
</dbReference>
<dbReference type="SUPFAM" id="SSF161033">
    <property type="entry name" value="Photosystem II reaction center protein M, PsbM"/>
    <property type="match status" value="1"/>
</dbReference>
<sequence>MEVNILAVIATALFIIIPTSFLLILYVKTASQADS</sequence>
<protein>
    <recommendedName>
        <fullName evidence="1">Photosystem II reaction center protein M</fullName>
        <shortName evidence="1">PSII-M</shortName>
    </recommendedName>
</protein>
<feature type="chain" id="PRO_0000276259" description="Photosystem II reaction center protein M">
    <location>
        <begin position="1"/>
        <end position="35"/>
    </location>
</feature>
<feature type="transmembrane region" description="Helical" evidence="1">
    <location>
        <begin position="5"/>
        <end position="25"/>
    </location>
</feature>
<evidence type="ECO:0000255" key="1">
    <source>
        <dbReference type="HAMAP-Rule" id="MF_00438"/>
    </source>
</evidence>
<geneLocation type="chloroplast"/>
<accession>Q32RW2</accession>
<keyword id="KW-0150">Chloroplast</keyword>
<keyword id="KW-0472">Membrane</keyword>
<keyword id="KW-0602">Photosynthesis</keyword>
<keyword id="KW-0604">Photosystem II</keyword>
<keyword id="KW-0934">Plastid</keyword>
<keyword id="KW-0674">Reaction center</keyword>
<keyword id="KW-0793">Thylakoid</keyword>
<keyword id="KW-0812">Transmembrane</keyword>
<keyword id="KW-1133">Transmembrane helix</keyword>